<feature type="chain" id="PRO_1000149316" description="2-isopropylmalate synthase">
    <location>
        <begin position="1"/>
        <end position="540"/>
    </location>
</feature>
<feature type="domain" description="Pyruvate carboxyltransferase" evidence="1">
    <location>
        <begin position="8"/>
        <end position="273"/>
    </location>
</feature>
<feature type="region of interest" description="Regulatory domain" evidence="1">
    <location>
        <begin position="408"/>
        <end position="540"/>
    </location>
</feature>
<feature type="binding site" evidence="1">
    <location>
        <position position="17"/>
    </location>
    <ligand>
        <name>Mn(2+)</name>
        <dbReference type="ChEBI" id="CHEBI:29035"/>
    </ligand>
</feature>
<feature type="binding site" evidence="1">
    <location>
        <position position="208"/>
    </location>
    <ligand>
        <name>Mn(2+)</name>
        <dbReference type="ChEBI" id="CHEBI:29035"/>
    </ligand>
</feature>
<feature type="binding site" evidence="1">
    <location>
        <position position="210"/>
    </location>
    <ligand>
        <name>Mn(2+)</name>
        <dbReference type="ChEBI" id="CHEBI:29035"/>
    </ligand>
</feature>
<feature type="binding site" evidence="1">
    <location>
        <position position="244"/>
    </location>
    <ligand>
        <name>Mn(2+)</name>
        <dbReference type="ChEBI" id="CHEBI:29035"/>
    </ligand>
</feature>
<sequence length="540" mass="58010">MAKDPGRVLIFDTTLRDGEQSPGASLNLEEKLAIAQQLARLGVDVIEAGFPFASPGDFAAVQRIAQQVGGENGPIICGLARASRGDIKACADAVAPAPKQRIHTFIATSDIHLEHKLRKSRKDVLGIVPEMVAYARSFVDDVEFSCEDAGRSDPEFLYEVIEAAISAGASTVNIPDTVGYTTPTEFGRLIEGINRNVPNIDEAVISVHGHNDLGLAVANFLEAVKSGARQLECTVNGIGERAGNAALEELVMAMHVRRRYFNPFFGRDEDSPTPLTAVRTEEITKTSRLVSNLTGMVVQPNKAIVGANAFAHESGIHQDGVLKNRLTYEIVDARTVGLTDNRISLGKLSGRSAVRARLEELGYDLSREDLDDAFARFKDLADRKREITDRDLESIVSVQVQQPDAKYQLKLVQVSCGSSLQPTATVTLADENGQEQTAASVGTGPVDAVCRSLNQLAGEPNELVEFSVKSVTEGIDAMGDVTIRLRRDGQLYSGHSAHTDVVVAAAEAFVNALNRLVAGTAGPTIHPQLDMAQLDSSPVH</sequence>
<comment type="function">
    <text evidence="1">Catalyzes the condensation of the acetyl group of acetyl-CoA with 3-methyl-2-oxobutanoate (2-ketoisovalerate) to form 3-carboxy-3-hydroxy-4-methylpentanoate (2-isopropylmalate).</text>
</comment>
<comment type="catalytic activity">
    <reaction evidence="1">
        <text>3-methyl-2-oxobutanoate + acetyl-CoA + H2O = (2S)-2-isopropylmalate + CoA + H(+)</text>
        <dbReference type="Rhea" id="RHEA:21524"/>
        <dbReference type="ChEBI" id="CHEBI:1178"/>
        <dbReference type="ChEBI" id="CHEBI:11851"/>
        <dbReference type="ChEBI" id="CHEBI:15377"/>
        <dbReference type="ChEBI" id="CHEBI:15378"/>
        <dbReference type="ChEBI" id="CHEBI:57287"/>
        <dbReference type="ChEBI" id="CHEBI:57288"/>
        <dbReference type="EC" id="2.3.3.13"/>
    </reaction>
</comment>
<comment type="cofactor">
    <cofactor evidence="1">
        <name>Mn(2+)</name>
        <dbReference type="ChEBI" id="CHEBI:29035"/>
    </cofactor>
</comment>
<comment type="pathway">
    <text evidence="1">Amino-acid biosynthesis; L-leucine biosynthesis; L-leucine from 3-methyl-2-oxobutanoate: step 1/4.</text>
</comment>
<comment type="subunit">
    <text evidence="1">Homodimer.</text>
</comment>
<comment type="subcellular location">
    <subcellularLocation>
        <location evidence="1">Cytoplasm</location>
    </subcellularLocation>
</comment>
<comment type="similarity">
    <text evidence="1">Belongs to the alpha-IPM synthase/homocitrate synthase family. LeuA type 1 subfamily.</text>
</comment>
<proteinExistence type="inferred from homology"/>
<evidence type="ECO:0000255" key="1">
    <source>
        <dbReference type="HAMAP-Rule" id="MF_01025"/>
    </source>
</evidence>
<name>LEU1_SYNS3</name>
<gene>
    <name evidence="1" type="primary">leuA</name>
    <name type="ordered locus">sync_0976</name>
</gene>
<organism>
    <name type="scientific">Synechococcus sp. (strain CC9311)</name>
    <dbReference type="NCBI Taxonomy" id="64471"/>
    <lineage>
        <taxon>Bacteria</taxon>
        <taxon>Bacillati</taxon>
        <taxon>Cyanobacteriota</taxon>
        <taxon>Cyanophyceae</taxon>
        <taxon>Synechococcales</taxon>
        <taxon>Synechococcaceae</taxon>
        <taxon>Synechococcus</taxon>
    </lineage>
</organism>
<protein>
    <recommendedName>
        <fullName evidence="1">2-isopropylmalate synthase</fullName>
        <ecNumber evidence="1">2.3.3.13</ecNumber>
    </recommendedName>
    <alternativeName>
        <fullName evidence="1">Alpha-IPM synthase</fullName>
    </alternativeName>
    <alternativeName>
        <fullName evidence="1">Alpha-isopropylmalate synthase</fullName>
    </alternativeName>
</protein>
<reference key="1">
    <citation type="journal article" date="2006" name="Proc. Natl. Acad. Sci. U.S.A.">
        <title>Genome sequence of Synechococcus CC9311: insights into adaptation to a coastal environment.</title>
        <authorList>
            <person name="Palenik B."/>
            <person name="Ren Q."/>
            <person name="Dupont C.L."/>
            <person name="Myers G.S."/>
            <person name="Heidelberg J.F."/>
            <person name="Badger J.H."/>
            <person name="Madupu R."/>
            <person name="Nelson W.C."/>
            <person name="Brinkac L.M."/>
            <person name="Dodson R.J."/>
            <person name="Durkin A.S."/>
            <person name="Daugherty S.C."/>
            <person name="Sullivan S.A."/>
            <person name="Khouri H."/>
            <person name="Mohamoud Y."/>
            <person name="Halpin R."/>
            <person name="Paulsen I.T."/>
        </authorList>
    </citation>
    <scope>NUCLEOTIDE SEQUENCE [LARGE SCALE GENOMIC DNA]</scope>
    <source>
        <strain>CC9311</strain>
    </source>
</reference>
<accession>Q0IBI3</accession>
<dbReference type="EC" id="2.3.3.13" evidence="1"/>
<dbReference type="EMBL" id="CP000435">
    <property type="protein sequence ID" value="ABI46602.1"/>
    <property type="molecule type" value="Genomic_DNA"/>
</dbReference>
<dbReference type="RefSeq" id="WP_011618911.1">
    <property type="nucleotide sequence ID" value="NC_008319.1"/>
</dbReference>
<dbReference type="SMR" id="Q0IBI3"/>
<dbReference type="STRING" id="64471.sync_0976"/>
<dbReference type="KEGG" id="syg:sync_0976"/>
<dbReference type="eggNOG" id="COG0119">
    <property type="taxonomic scope" value="Bacteria"/>
</dbReference>
<dbReference type="HOGENOM" id="CLU_022158_0_1_3"/>
<dbReference type="OrthoDB" id="9804858at2"/>
<dbReference type="UniPathway" id="UPA00048">
    <property type="reaction ID" value="UER00070"/>
</dbReference>
<dbReference type="Proteomes" id="UP000001961">
    <property type="component" value="Chromosome"/>
</dbReference>
<dbReference type="GO" id="GO:0005737">
    <property type="term" value="C:cytoplasm"/>
    <property type="evidence" value="ECO:0007669"/>
    <property type="project" value="UniProtKB-SubCell"/>
</dbReference>
<dbReference type="GO" id="GO:0003852">
    <property type="term" value="F:2-isopropylmalate synthase activity"/>
    <property type="evidence" value="ECO:0007669"/>
    <property type="project" value="UniProtKB-UniRule"/>
</dbReference>
<dbReference type="GO" id="GO:0003985">
    <property type="term" value="F:acetyl-CoA C-acetyltransferase activity"/>
    <property type="evidence" value="ECO:0007669"/>
    <property type="project" value="UniProtKB-UniRule"/>
</dbReference>
<dbReference type="GO" id="GO:0030145">
    <property type="term" value="F:manganese ion binding"/>
    <property type="evidence" value="ECO:0007669"/>
    <property type="project" value="UniProtKB-UniRule"/>
</dbReference>
<dbReference type="GO" id="GO:0009098">
    <property type="term" value="P:L-leucine biosynthetic process"/>
    <property type="evidence" value="ECO:0007669"/>
    <property type="project" value="UniProtKB-UniRule"/>
</dbReference>
<dbReference type="CDD" id="cd07940">
    <property type="entry name" value="DRE_TIM_IPMS"/>
    <property type="match status" value="1"/>
</dbReference>
<dbReference type="FunFam" id="1.10.238.260:FF:000001">
    <property type="entry name" value="2-isopropylmalate synthase"/>
    <property type="match status" value="1"/>
</dbReference>
<dbReference type="FunFam" id="3.20.20.70:FF:000010">
    <property type="entry name" value="2-isopropylmalate synthase"/>
    <property type="match status" value="1"/>
</dbReference>
<dbReference type="Gene3D" id="1.10.238.260">
    <property type="match status" value="1"/>
</dbReference>
<dbReference type="Gene3D" id="3.30.160.270">
    <property type="match status" value="1"/>
</dbReference>
<dbReference type="Gene3D" id="3.20.20.70">
    <property type="entry name" value="Aldolase class I"/>
    <property type="match status" value="1"/>
</dbReference>
<dbReference type="HAMAP" id="MF_01025">
    <property type="entry name" value="LeuA_type1"/>
    <property type="match status" value="1"/>
</dbReference>
<dbReference type="InterPro" id="IPR050073">
    <property type="entry name" value="2-IPM_HCS-like"/>
</dbReference>
<dbReference type="InterPro" id="IPR013709">
    <property type="entry name" value="2-isopropylmalate_synth_dimer"/>
</dbReference>
<dbReference type="InterPro" id="IPR002034">
    <property type="entry name" value="AIPM/Hcit_synth_CS"/>
</dbReference>
<dbReference type="InterPro" id="IPR013785">
    <property type="entry name" value="Aldolase_TIM"/>
</dbReference>
<dbReference type="InterPro" id="IPR054691">
    <property type="entry name" value="LeuA/HCS_post-cat"/>
</dbReference>
<dbReference type="InterPro" id="IPR036230">
    <property type="entry name" value="LeuA_allosteric_dom_sf"/>
</dbReference>
<dbReference type="InterPro" id="IPR005671">
    <property type="entry name" value="LeuA_bact_synth"/>
</dbReference>
<dbReference type="InterPro" id="IPR000891">
    <property type="entry name" value="PYR_CT"/>
</dbReference>
<dbReference type="NCBIfam" id="TIGR00973">
    <property type="entry name" value="leuA_bact"/>
    <property type="match status" value="1"/>
</dbReference>
<dbReference type="NCBIfam" id="NF002086">
    <property type="entry name" value="PRK00915.1-3"/>
    <property type="match status" value="1"/>
</dbReference>
<dbReference type="PANTHER" id="PTHR10277:SF9">
    <property type="entry name" value="2-ISOPROPYLMALATE SYNTHASE 1, CHLOROPLASTIC-RELATED"/>
    <property type="match status" value="1"/>
</dbReference>
<dbReference type="PANTHER" id="PTHR10277">
    <property type="entry name" value="HOMOCITRATE SYNTHASE-RELATED"/>
    <property type="match status" value="1"/>
</dbReference>
<dbReference type="Pfam" id="PF22617">
    <property type="entry name" value="HCS_D2"/>
    <property type="match status" value="1"/>
</dbReference>
<dbReference type="Pfam" id="PF00682">
    <property type="entry name" value="HMGL-like"/>
    <property type="match status" value="1"/>
</dbReference>
<dbReference type="Pfam" id="PF08502">
    <property type="entry name" value="LeuA_dimer"/>
    <property type="match status" value="1"/>
</dbReference>
<dbReference type="SMART" id="SM00917">
    <property type="entry name" value="LeuA_dimer"/>
    <property type="match status" value="1"/>
</dbReference>
<dbReference type="SUPFAM" id="SSF110921">
    <property type="entry name" value="2-isopropylmalate synthase LeuA, allosteric (dimerisation) domain"/>
    <property type="match status" value="1"/>
</dbReference>
<dbReference type="SUPFAM" id="SSF51569">
    <property type="entry name" value="Aldolase"/>
    <property type="match status" value="1"/>
</dbReference>
<dbReference type="PROSITE" id="PS00815">
    <property type="entry name" value="AIPM_HOMOCIT_SYNTH_1"/>
    <property type="match status" value="1"/>
</dbReference>
<dbReference type="PROSITE" id="PS00816">
    <property type="entry name" value="AIPM_HOMOCIT_SYNTH_2"/>
    <property type="match status" value="1"/>
</dbReference>
<dbReference type="PROSITE" id="PS50991">
    <property type="entry name" value="PYR_CT"/>
    <property type="match status" value="1"/>
</dbReference>
<keyword id="KW-0028">Amino-acid biosynthesis</keyword>
<keyword id="KW-0100">Branched-chain amino acid biosynthesis</keyword>
<keyword id="KW-0963">Cytoplasm</keyword>
<keyword id="KW-0432">Leucine biosynthesis</keyword>
<keyword id="KW-0464">Manganese</keyword>
<keyword id="KW-0479">Metal-binding</keyword>
<keyword id="KW-1185">Reference proteome</keyword>
<keyword id="KW-0808">Transferase</keyword>